<proteinExistence type="inferred from homology"/>
<keyword id="KW-0028">Amino-acid biosynthesis</keyword>
<keyword id="KW-0061">Asparagine biosynthesis</keyword>
<keyword id="KW-0067">ATP-binding</keyword>
<keyword id="KW-0963">Cytoplasm</keyword>
<keyword id="KW-0436">Ligase</keyword>
<keyword id="KW-0547">Nucleotide-binding</keyword>
<dbReference type="EC" id="6.3.1.1" evidence="1"/>
<dbReference type="EMBL" id="CP000262">
    <property type="protein sequence ID" value="ABF38326.1"/>
    <property type="molecule type" value="Genomic_DNA"/>
</dbReference>
<dbReference type="SMR" id="Q1J5R0"/>
<dbReference type="KEGG" id="spi:MGAS10750_Spy1376"/>
<dbReference type="HOGENOM" id="CLU_071543_0_0_9"/>
<dbReference type="UniPathway" id="UPA00134">
    <property type="reaction ID" value="UER00194"/>
</dbReference>
<dbReference type="Proteomes" id="UP000002434">
    <property type="component" value="Chromosome"/>
</dbReference>
<dbReference type="GO" id="GO:0005829">
    <property type="term" value="C:cytosol"/>
    <property type="evidence" value="ECO:0007669"/>
    <property type="project" value="TreeGrafter"/>
</dbReference>
<dbReference type="GO" id="GO:0004071">
    <property type="term" value="F:aspartate-ammonia ligase activity"/>
    <property type="evidence" value="ECO:0007669"/>
    <property type="project" value="UniProtKB-UniRule"/>
</dbReference>
<dbReference type="GO" id="GO:0005524">
    <property type="term" value="F:ATP binding"/>
    <property type="evidence" value="ECO:0007669"/>
    <property type="project" value="UniProtKB-UniRule"/>
</dbReference>
<dbReference type="GO" id="GO:0140096">
    <property type="term" value="F:catalytic activity, acting on a protein"/>
    <property type="evidence" value="ECO:0007669"/>
    <property type="project" value="UniProtKB-ARBA"/>
</dbReference>
<dbReference type="GO" id="GO:0016740">
    <property type="term" value="F:transferase activity"/>
    <property type="evidence" value="ECO:0007669"/>
    <property type="project" value="UniProtKB-ARBA"/>
</dbReference>
<dbReference type="GO" id="GO:0070981">
    <property type="term" value="P:L-asparagine biosynthetic process"/>
    <property type="evidence" value="ECO:0007669"/>
    <property type="project" value="UniProtKB-UniRule"/>
</dbReference>
<dbReference type="CDD" id="cd00645">
    <property type="entry name" value="AsnA"/>
    <property type="match status" value="1"/>
</dbReference>
<dbReference type="Gene3D" id="3.30.930.10">
    <property type="entry name" value="Bira Bifunctional Protein, Domain 2"/>
    <property type="match status" value="1"/>
</dbReference>
<dbReference type="HAMAP" id="MF_00555">
    <property type="entry name" value="AsnA"/>
    <property type="match status" value="1"/>
</dbReference>
<dbReference type="InterPro" id="IPR006195">
    <property type="entry name" value="aa-tRNA-synth_II"/>
</dbReference>
<dbReference type="InterPro" id="IPR045864">
    <property type="entry name" value="aa-tRNA-synth_II/BPL/LPL"/>
</dbReference>
<dbReference type="InterPro" id="IPR004618">
    <property type="entry name" value="AsnA"/>
</dbReference>
<dbReference type="NCBIfam" id="TIGR00669">
    <property type="entry name" value="asnA"/>
    <property type="match status" value="1"/>
</dbReference>
<dbReference type="PANTHER" id="PTHR30073">
    <property type="entry name" value="ASPARTATE--AMMONIA LIGASE"/>
    <property type="match status" value="1"/>
</dbReference>
<dbReference type="PANTHER" id="PTHR30073:SF5">
    <property type="entry name" value="ASPARTATE--AMMONIA LIGASE"/>
    <property type="match status" value="1"/>
</dbReference>
<dbReference type="Pfam" id="PF03590">
    <property type="entry name" value="AsnA"/>
    <property type="match status" value="1"/>
</dbReference>
<dbReference type="PIRSF" id="PIRSF001555">
    <property type="entry name" value="Asp_ammon_ligase"/>
    <property type="match status" value="1"/>
</dbReference>
<dbReference type="SUPFAM" id="SSF55681">
    <property type="entry name" value="Class II aaRS and biotin synthetases"/>
    <property type="match status" value="1"/>
</dbReference>
<dbReference type="PROSITE" id="PS50862">
    <property type="entry name" value="AA_TRNA_LIGASE_II"/>
    <property type="match status" value="1"/>
</dbReference>
<accession>Q1J5R0</accession>
<organism>
    <name type="scientific">Streptococcus pyogenes serotype M4 (strain MGAS10750)</name>
    <dbReference type="NCBI Taxonomy" id="370554"/>
    <lineage>
        <taxon>Bacteria</taxon>
        <taxon>Bacillati</taxon>
        <taxon>Bacillota</taxon>
        <taxon>Bacilli</taxon>
        <taxon>Lactobacillales</taxon>
        <taxon>Streptococcaceae</taxon>
        <taxon>Streptococcus</taxon>
    </lineage>
</organism>
<evidence type="ECO:0000255" key="1">
    <source>
        <dbReference type="HAMAP-Rule" id="MF_00555"/>
    </source>
</evidence>
<reference key="1">
    <citation type="journal article" date="2006" name="Proc. Natl. Acad. Sci. U.S.A.">
        <title>Molecular genetic anatomy of inter- and intraserotype variation in the human bacterial pathogen group A Streptococcus.</title>
        <authorList>
            <person name="Beres S.B."/>
            <person name="Richter E.W."/>
            <person name="Nagiec M.J."/>
            <person name="Sumby P."/>
            <person name="Porcella S.F."/>
            <person name="DeLeo F.R."/>
            <person name="Musser J.M."/>
        </authorList>
    </citation>
    <scope>NUCLEOTIDE SEQUENCE [LARGE SCALE GENOMIC DNA]</scope>
    <source>
        <strain>MGAS10750</strain>
    </source>
</reference>
<feature type="chain" id="PRO_1000017968" description="Aspartate--ammonia ligase">
    <location>
        <begin position="1"/>
        <end position="330"/>
    </location>
</feature>
<comment type="catalytic activity">
    <reaction evidence="1">
        <text>L-aspartate + NH4(+) + ATP = L-asparagine + AMP + diphosphate + H(+)</text>
        <dbReference type="Rhea" id="RHEA:11372"/>
        <dbReference type="ChEBI" id="CHEBI:15378"/>
        <dbReference type="ChEBI" id="CHEBI:28938"/>
        <dbReference type="ChEBI" id="CHEBI:29991"/>
        <dbReference type="ChEBI" id="CHEBI:30616"/>
        <dbReference type="ChEBI" id="CHEBI:33019"/>
        <dbReference type="ChEBI" id="CHEBI:58048"/>
        <dbReference type="ChEBI" id="CHEBI:456215"/>
        <dbReference type="EC" id="6.3.1.1"/>
    </reaction>
</comment>
<comment type="pathway">
    <text evidence="1">Amino-acid biosynthesis; L-asparagine biosynthesis; L-asparagine from L-aspartate (ammonia route): step 1/1.</text>
</comment>
<comment type="subcellular location">
    <subcellularLocation>
        <location evidence="1">Cytoplasm</location>
    </subcellularLocation>
</comment>
<comment type="similarity">
    <text evidence="1">Belongs to the class-II aminoacyl-tRNA synthetase family. AsnA subfamily.</text>
</comment>
<name>ASNA_STRPF</name>
<protein>
    <recommendedName>
        <fullName evidence="1">Aspartate--ammonia ligase</fullName>
        <ecNumber evidence="1">6.3.1.1</ecNumber>
    </recommendedName>
    <alternativeName>
        <fullName evidence="1">Asparagine synthetase A</fullName>
    </alternativeName>
</protein>
<gene>
    <name evidence="1" type="primary">asnA</name>
    <name type="ordered locus">MGAS10750_Spy1376</name>
</gene>
<sequence>MKKSFIHQQEEISFVKNTFTQYLIAKLDVVEVQGPILSRVGDGMQDNLSGTENPVSVNVLKIPNATFEVVHSLAKWKRHTLARFGFNEGEGLVVNMKALRPDEDSLDQTHSVYVDQWDWEKVIPDGKRNLAYLKETVETIYKVIRLTELAVEARYDIEAVLPKKITFIHTEELVAKYPDLTPKERENAITKEFGAVFLIGIGGVLPDGKPHDGRAPDYDDWTTETENGYHGLNGDILVWNDQLGSAFELSSMGIRVDEEALKRQVEMTGDQDRLAFDWHKSLLNGLFPLTIGGGIGQSRMVMFLLRKKHIGEVQTSVWPQEVRDSYDNIL</sequence>